<feature type="chain" id="PRO_0000382596" description="Cytosolic Fe-S cluster assembly factor NUBP1 homolog">
    <location>
        <begin position="1"/>
        <end position="310"/>
    </location>
</feature>
<feature type="binding site" evidence="1">
    <location>
        <position position="12"/>
    </location>
    <ligand>
        <name>[4Fe-4S] cluster</name>
        <dbReference type="ChEBI" id="CHEBI:49883"/>
        <label>1</label>
    </ligand>
</feature>
<feature type="binding site" evidence="1">
    <location>
        <position position="26"/>
    </location>
    <ligand>
        <name>[4Fe-4S] cluster</name>
        <dbReference type="ChEBI" id="CHEBI:49883"/>
        <label>1</label>
    </ligand>
</feature>
<feature type="binding site" evidence="1">
    <location>
        <position position="29"/>
    </location>
    <ligand>
        <name>[4Fe-4S] cluster</name>
        <dbReference type="ChEBI" id="CHEBI:49883"/>
        <label>1</label>
    </ligand>
</feature>
<feature type="binding site" evidence="1">
    <location>
        <position position="35"/>
    </location>
    <ligand>
        <name>[4Fe-4S] cluster</name>
        <dbReference type="ChEBI" id="CHEBI:49883"/>
        <label>1</label>
    </ligand>
</feature>
<feature type="binding site" evidence="1">
    <location>
        <begin position="66"/>
        <end position="73"/>
    </location>
    <ligand>
        <name>ATP</name>
        <dbReference type="ChEBI" id="CHEBI:30616"/>
    </ligand>
</feature>
<feature type="binding site" evidence="1">
    <location>
        <position position="240"/>
    </location>
    <ligand>
        <name>[4Fe-4S] cluster</name>
        <dbReference type="ChEBI" id="CHEBI:49883"/>
        <label>2</label>
        <note>ligand shared with heterodimeric partner</note>
    </ligand>
</feature>
<feature type="binding site" evidence="1">
    <location>
        <position position="243"/>
    </location>
    <ligand>
        <name>[4Fe-4S] cluster</name>
        <dbReference type="ChEBI" id="CHEBI:49883"/>
        <label>2</label>
        <note>ligand shared with heterodimeric partner</note>
    </ligand>
</feature>
<organism>
    <name type="scientific">Brugia malayi</name>
    <name type="common">Filarial nematode worm</name>
    <dbReference type="NCBI Taxonomy" id="6279"/>
    <lineage>
        <taxon>Eukaryota</taxon>
        <taxon>Metazoa</taxon>
        <taxon>Ecdysozoa</taxon>
        <taxon>Nematoda</taxon>
        <taxon>Chromadorea</taxon>
        <taxon>Rhabditida</taxon>
        <taxon>Spirurina</taxon>
        <taxon>Spiruromorpha</taxon>
        <taxon>Filarioidea</taxon>
        <taxon>Onchocercidae</taxon>
        <taxon>Brugia</taxon>
    </lineage>
</organism>
<gene>
    <name type="ORF">Bm1_36105</name>
</gene>
<dbReference type="EMBL" id="DS239410">
    <property type="protein sequence ID" value="EDP32532.1"/>
    <property type="molecule type" value="Genomic_DNA"/>
</dbReference>
<dbReference type="SMR" id="A8PW87"/>
<dbReference type="FunCoup" id="A8PW87">
    <property type="interactions" value="1244"/>
</dbReference>
<dbReference type="STRING" id="6279.A8PW87"/>
<dbReference type="EnsemblMetazoa" id="Bm14008.1">
    <property type="protein sequence ID" value="Bm14008.1"/>
    <property type="gene ID" value="WBGene00234269"/>
</dbReference>
<dbReference type="GeneID" id="6102108"/>
<dbReference type="KEGG" id="bmy:BM_BM14008"/>
<dbReference type="CTD" id="6102108"/>
<dbReference type="WormBase" id="Bm14008">
    <property type="protein sequence ID" value="BM01201"/>
    <property type="gene ID" value="WBGene00234269"/>
    <property type="gene designation" value="Bma-nubp-1"/>
</dbReference>
<dbReference type="HOGENOM" id="CLU_024839_0_1_1"/>
<dbReference type="InParanoid" id="A8PW87"/>
<dbReference type="OMA" id="VSGCPMR"/>
<dbReference type="OrthoDB" id="1741334at2759"/>
<dbReference type="Proteomes" id="UP000006672">
    <property type="component" value="Unassembled WGS sequence"/>
</dbReference>
<dbReference type="GO" id="GO:0005829">
    <property type="term" value="C:cytosol"/>
    <property type="evidence" value="ECO:0000250"/>
    <property type="project" value="UniProtKB"/>
</dbReference>
<dbReference type="GO" id="GO:0051539">
    <property type="term" value="F:4 iron, 4 sulfur cluster binding"/>
    <property type="evidence" value="ECO:0007669"/>
    <property type="project" value="UniProtKB-UniRule"/>
</dbReference>
<dbReference type="GO" id="GO:0005524">
    <property type="term" value="F:ATP binding"/>
    <property type="evidence" value="ECO:0007669"/>
    <property type="project" value="UniProtKB-KW"/>
</dbReference>
<dbReference type="GO" id="GO:0016887">
    <property type="term" value="F:ATP hydrolysis activity"/>
    <property type="evidence" value="ECO:0007669"/>
    <property type="project" value="InterPro"/>
</dbReference>
<dbReference type="GO" id="GO:0140663">
    <property type="term" value="F:ATP-dependent FeS chaperone activity"/>
    <property type="evidence" value="ECO:0007669"/>
    <property type="project" value="InterPro"/>
</dbReference>
<dbReference type="GO" id="GO:0051536">
    <property type="term" value="F:iron-sulfur cluster binding"/>
    <property type="evidence" value="ECO:0000250"/>
    <property type="project" value="UniProtKB"/>
</dbReference>
<dbReference type="GO" id="GO:0046872">
    <property type="term" value="F:metal ion binding"/>
    <property type="evidence" value="ECO:0007669"/>
    <property type="project" value="UniProtKB-KW"/>
</dbReference>
<dbReference type="GO" id="GO:0016226">
    <property type="term" value="P:iron-sulfur cluster assembly"/>
    <property type="evidence" value="ECO:0000250"/>
    <property type="project" value="UniProtKB"/>
</dbReference>
<dbReference type="GO" id="GO:1902855">
    <property type="term" value="P:regulation of non-motile cilium assembly"/>
    <property type="evidence" value="ECO:0007669"/>
    <property type="project" value="EnsemblMetazoa"/>
</dbReference>
<dbReference type="CDD" id="cd02037">
    <property type="entry name" value="Mrp_NBP35"/>
    <property type="match status" value="1"/>
</dbReference>
<dbReference type="FunFam" id="3.40.50.300:FF:002354">
    <property type="entry name" value="Cytosolic Fe-S cluster assembly factor NUBP1 homolog"/>
    <property type="match status" value="1"/>
</dbReference>
<dbReference type="Gene3D" id="3.40.50.300">
    <property type="entry name" value="P-loop containing nucleotide triphosphate hydrolases"/>
    <property type="match status" value="1"/>
</dbReference>
<dbReference type="HAMAP" id="MF_02040">
    <property type="entry name" value="Mrp_NBP35"/>
    <property type="match status" value="1"/>
</dbReference>
<dbReference type="HAMAP" id="MF_03038">
    <property type="entry name" value="NUBP1"/>
    <property type="match status" value="1"/>
</dbReference>
<dbReference type="InterPro" id="IPR003593">
    <property type="entry name" value="AAA+_ATPase"/>
</dbReference>
<dbReference type="InterPro" id="IPR000808">
    <property type="entry name" value="Mrp-like_CS"/>
</dbReference>
<dbReference type="InterPro" id="IPR019591">
    <property type="entry name" value="Mrp/NBP35_ATP-bd"/>
</dbReference>
<dbReference type="InterPro" id="IPR028601">
    <property type="entry name" value="NUBP1/Nbp35"/>
</dbReference>
<dbReference type="InterPro" id="IPR027417">
    <property type="entry name" value="P-loop_NTPase"/>
</dbReference>
<dbReference type="InterPro" id="IPR033756">
    <property type="entry name" value="YlxH/NBP35"/>
</dbReference>
<dbReference type="PANTHER" id="PTHR23264:SF35">
    <property type="entry name" value="CYTOSOLIC FE-S CLUSTER ASSEMBLY FACTOR NUBP1"/>
    <property type="match status" value="1"/>
</dbReference>
<dbReference type="PANTHER" id="PTHR23264">
    <property type="entry name" value="NUCLEOTIDE-BINDING PROTEIN NBP35 YEAST -RELATED"/>
    <property type="match status" value="1"/>
</dbReference>
<dbReference type="Pfam" id="PF10609">
    <property type="entry name" value="ParA"/>
    <property type="match status" value="1"/>
</dbReference>
<dbReference type="SMART" id="SM00382">
    <property type="entry name" value="AAA"/>
    <property type="match status" value="1"/>
</dbReference>
<dbReference type="SUPFAM" id="SSF52540">
    <property type="entry name" value="P-loop containing nucleoside triphosphate hydrolases"/>
    <property type="match status" value="1"/>
</dbReference>
<dbReference type="PROSITE" id="PS01215">
    <property type="entry name" value="MRP"/>
    <property type="match status" value="1"/>
</dbReference>
<protein>
    <recommendedName>
        <fullName evidence="1">Cytosolic Fe-S cluster assembly factor NUBP1 homolog</fullName>
    </recommendedName>
</protein>
<proteinExistence type="inferred from homology"/>
<accession>A8PW87</accession>
<name>NUBP1_BRUMA</name>
<reference key="1">
    <citation type="journal article" date="2007" name="Science">
        <title>Draft genome of the filarial nematode parasite Brugia malayi.</title>
        <authorList>
            <person name="Ghedin E."/>
            <person name="Wang S."/>
            <person name="Spiro D."/>
            <person name="Caler E."/>
            <person name="Zhao Q."/>
            <person name="Crabtree J."/>
            <person name="Allen J.E."/>
            <person name="Delcher A.L."/>
            <person name="Guiliano D.B."/>
            <person name="Miranda-Saavedra D."/>
            <person name="Angiuoli S.V."/>
            <person name="Creasy T."/>
            <person name="Amedeo P."/>
            <person name="Haas B."/>
            <person name="El-Sayed N.M."/>
            <person name="Wortman J.R."/>
            <person name="Feldblyum T."/>
            <person name="Tallon L."/>
            <person name="Schatz M."/>
            <person name="Shumway M."/>
            <person name="Koo H."/>
            <person name="Salzberg S.L."/>
            <person name="Schobel S."/>
            <person name="Pertea M."/>
            <person name="Pop M."/>
            <person name="White O."/>
            <person name="Barton G.J."/>
            <person name="Carlow C.K.S."/>
            <person name="Crawford M.J."/>
            <person name="Daub J."/>
            <person name="Dimmic M.W."/>
            <person name="Estes C.F."/>
            <person name="Foster J.M."/>
            <person name="Ganatra M."/>
            <person name="Gregory W.F."/>
            <person name="Johnson N.M."/>
            <person name="Jin J."/>
            <person name="Komuniecki R."/>
            <person name="Korf I."/>
            <person name="Kumar S."/>
            <person name="Laney S."/>
            <person name="Li B.-W."/>
            <person name="Li W."/>
            <person name="Lindblom T.H."/>
            <person name="Lustigman S."/>
            <person name="Ma D."/>
            <person name="Maina C.V."/>
            <person name="Martin D.M."/>
            <person name="McCarter J.P."/>
            <person name="McReynolds L."/>
            <person name="Mitreva M."/>
            <person name="Nutman T.B."/>
            <person name="Parkinson J."/>
            <person name="Peregrin-Alvarez J.M."/>
            <person name="Poole C."/>
            <person name="Ren Q."/>
            <person name="Saunders L."/>
            <person name="Sluder A.E."/>
            <person name="Smith K."/>
            <person name="Stanke M."/>
            <person name="Unnasch T.R."/>
            <person name="Ware J."/>
            <person name="Wei A.D."/>
            <person name="Weil G."/>
            <person name="Williams D.J."/>
            <person name="Zhang Y."/>
            <person name="Williams S.A."/>
            <person name="Fraser-Liggett C."/>
            <person name="Slatko B."/>
            <person name="Blaxter M.L."/>
            <person name="Scott A.L."/>
        </authorList>
    </citation>
    <scope>NUCLEOTIDE SEQUENCE [LARGE SCALE GENOMIC DNA]</scope>
</reference>
<sequence length="310" mass="33595">MNDVPENANEDCPGATSADAGKAFSCTGCPNQTLCASGEIRRPDSDLLAVTDRLKNVRHKILILSGKGGVGKSAVAANLARALAVNDKIQVGLLDIDICGPSQARMLGVEQESVHESGDGWCPIVVKDNLIVMSIAFLLQNRSEAVIWRGARKNALIKQFLKDVDWGTLDYLLIDTPPGTSDEHISIVQFLLQAGSVDGAIIVTTPQEISLLDVRKEINFCRRTKINILGIVENMSSFICPCCSNVSQLFPRTTGGAEMMCNELSVPLLALLPFDSHMAKCADSGEDYFEKYHNSALAKEFEKLAQLISK</sequence>
<evidence type="ECO:0000255" key="1">
    <source>
        <dbReference type="HAMAP-Rule" id="MF_03038"/>
    </source>
</evidence>
<comment type="function">
    <text evidence="1">Component of the cytosolic iron-sulfur (Fe/S) protein assembly (CIA) machinery. Required for maturation of extramitochondrial Fe-S proteins. The NUBP1-NUBP2 heterotetramer forms a Fe-S scaffold complex, mediating the de novo assembly of an Fe-S cluster and its transfer to target apoproteins.</text>
</comment>
<comment type="cofactor">
    <cofactor evidence="1">
        <name>[4Fe-4S] cluster</name>
        <dbReference type="ChEBI" id="CHEBI:49883"/>
    </cofactor>
    <text evidence="1">Binds 4 [4Fe-4S] clusters per heterotetramer. Contains two stable clusters in the N-termini of NUBP1 and two labile, bridging clusters between subunits of the NUBP1-NUBP2 heterotetramer.</text>
</comment>
<comment type="subunit">
    <text evidence="1">Heterotetramer of 2 NUBP1 and 2 NUBP2 chains.</text>
</comment>
<comment type="subcellular location">
    <subcellularLocation>
        <location evidence="1">Cytoplasm</location>
    </subcellularLocation>
</comment>
<comment type="similarity">
    <text evidence="1">Belongs to the Mrp/NBP35 ATP-binding proteins family. NUBP1/NBP35 subfamily.</text>
</comment>
<keyword id="KW-0004">4Fe-4S</keyword>
<keyword id="KW-0067">ATP-binding</keyword>
<keyword id="KW-0963">Cytoplasm</keyword>
<keyword id="KW-0408">Iron</keyword>
<keyword id="KW-0411">Iron-sulfur</keyword>
<keyword id="KW-0479">Metal-binding</keyword>
<keyword id="KW-0547">Nucleotide-binding</keyword>
<keyword id="KW-1185">Reference proteome</keyword>